<sequence>MMVVLLGATTLVLVAVAPWVLSAAAGGKNLKSPQKVEVDIIDDNFILRWNRSDESVGNVTFSFDYQKTGMDNWIKLSGCQNITSTKCNFSSLKLNVYEEIKLRIRAEKENTSSWYEVDSFTPFRKAQIGPPEVHLEAEDKAIVIHISPGTKDSVMWALDGLSFTYSLVIWKNSSGVEERIENIYSRHKIYKLSPETTYCLKVKAALLTSWKIGVYSPVHCIKTTVENELPPPENIEVSVQNQNYVLKWDYTYANMTFQVQWLHAFLKRNPGNHLYKWKQIPDCENVKTTQCVFPQNVFQKGIYLLRVQASDGNNTSFWSEEIKFDTEIQAFLLPPVFNIRSLSDSFHIYIGAPKQSGNTPVIQDYPLIYEIIFWENTSNAERKIIEKKTDVTVPNLKPLTVYCVKARAHTMDEKLNKSSVFSDAVCEKTKPGNTSKIWLIVGICIALFALPFVIYAAKVFLRCINYVFFPSLKPSSSIDEYFSEQPLKNLLLSTSEEQIEKCFIIENISTIATVEETNQTDEDHKKYSSQTSQDSGNYSNEDESESKTSEELQQDFV</sequence>
<organism>
    <name type="scientific">Homo sapiens</name>
    <name type="common">Human</name>
    <dbReference type="NCBI Taxonomy" id="9606"/>
    <lineage>
        <taxon>Eukaryota</taxon>
        <taxon>Metazoa</taxon>
        <taxon>Chordata</taxon>
        <taxon>Craniata</taxon>
        <taxon>Vertebrata</taxon>
        <taxon>Euteleostomi</taxon>
        <taxon>Mammalia</taxon>
        <taxon>Eutheria</taxon>
        <taxon>Euarchontoglires</taxon>
        <taxon>Primates</taxon>
        <taxon>Haplorrhini</taxon>
        <taxon>Catarrhini</taxon>
        <taxon>Hominidae</taxon>
        <taxon>Homo</taxon>
    </lineage>
</organism>
<dbReference type="EMBL" id="J03171">
    <property type="protein sequence ID" value="AAA52730.1"/>
    <property type="molecule type" value="mRNA"/>
</dbReference>
<dbReference type="EMBL" id="X60459">
    <property type="protein sequence ID" value="CAA42992.1"/>
    <property type="molecule type" value="Genomic_DNA"/>
</dbReference>
<dbReference type="EMBL" id="AK298051">
    <property type="protein sequence ID" value="BAG60345.1"/>
    <property type="molecule type" value="mRNA"/>
</dbReference>
<dbReference type="EMBL" id="AK312631">
    <property type="protein sequence ID" value="BAG35516.1"/>
    <property type="molecule type" value="mRNA"/>
</dbReference>
<dbReference type="EMBL" id="AK222770">
    <property type="protein sequence ID" value="BAD96490.1"/>
    <property type="molecule type" value="mRNA"/>
</dbReference>
<dbReference type="EMBL" id="AK222812">
    <property type="protein sequence ID" value="BAD96532.1"/>
    <property type="molecule type" value="mRNA"/>
</dbReference>
<dbReference type="EMBL" id="AY654286">
    <property type="protein sequence ID" value="AAT49100.1"/>
    <property type="molecule type" value="Genomic_DNA"/>
</dbReference>
<dbReference type="EMBL" id="AF039907">
    <property type="status" value="NOT_ANNOTATED_CDS"/>
    <property type="molecule type" value="Genomic_DNA"/>
</dbReference>
<dbReference type="EMBL" id="AP000296">
    <property type="status" value="NOT_ANNOTATED_CDS"/>
    <property type="molecule type" value="Genomic_DNA"/>
</dbReference>
<dbReference type="EMBL" id="AP000297">
    <property type="status" value="NOT_ANNOTATED_CDS"/>
    <property type="molecule type" value="Genomic_DNA"/>
</dbReference>
<dbReference type="EMBL" id="AP000298">
    <property type="status" value="NOT_ANNOTATED_CDS"/>
    <property type="molecule type" value="Genomic_DNA"/>
</dbReference>
<dbReference type="EMBL" id="CH471079">
    <property type="protein sequence ID" value="EAX09837.1"/>
    <property type="molecule type" value="Genomic_DNA"/>
</dbReference>
<dbReference type="EMBL" id="CH471079">
    <property type="protein sequence ID" value="EAX09839.1"/>
    <property type="molecule type" value="Genomic_DNA"/>
</dbReference>
<dbReference type="EMBL" id="BC002590">
    <property type="protein sequence ID" value="AAH02590.1"/>
    <property type="status" value="ALT_SEQ"/>
    <property type="molecule type" value="mRNA"/>
</dbReference>
<dbReference type="EMBL" id="BC021825">
    <property type="protein sequence ID" value="AAH21825.1"/>
    <property type="molecule type" value="mRNA"/>
</dbReference>
<dbReference type="CCDS" id="CCDS13624.1">
    <molecule id="P17181-1"/>
</dbReference>
<dbReference type="CCDS" id="CCDS93089.1">
    <molecule id="P17181-4"/>
</dbReference>
<dbReference type="PIR" id="A32694">
    <property type="entry name" value="A32694"/>
</dbReference>
<dbReference type="PIR" id="S41602">
    <property type="entry name" value="S41602"/>
</dbReference>
<dbReference type="RefSeq" id="NP_000620.2">
    <molecule id="P17181-1"/>
    <property type="nucleotide sequence ID" value="NM_000629.2"/>
</dbReference>
<dbReference type="RefSeq" id="NP_001371433.1">
    <molecule id="P17181-4"/>
    <property type="nucleotide sequence ID" value="NM_001384504.1"/>
</dbReference>
<dbReference type="RefSeq" id="XP_005261021.1">
    <property type="nucleotide sequence ID" value="XM_005260964.2"/>
</dbReference>
<dbReference type="PDB" id="3S98">
    <property type="method" value="X-ray"/>
    <property type="resolution" value="1.90 A"/>
    <property type="chains" value="A=30-332"/>
</dbReference>
<dbReference type="PDB" id="3SE3">
    <property type="method" value="X-ray"/>
    <property type="resolution" value="4.00 A"/>
    <property type="chains" value="A=28-436"/>
</dbReference>
<dbReference type="PDB" id="3SE4">
    <property type="method" value="X-ray"/>
    <property type="resolution" value="3.50 A"/>
    <property type="chains" value="A=28-436"/>
</dbReference>
<dbReference type="PDB" id="4PO6">
    <property type="method" value="X-ray"/>
    <property type="resolution" value="1.99 A"/>
    <property type="chains" value="B=478-507"/>
</dbReference>
<dbReference type="PDB" id="8Y31">
    <property type="method" value="X-ray"/>
    <property type="resolution" value="2.68 A"/>
    <property type="chains" value="E/F=1-333"/>
</dbReference>
<dbReference type="PDBsum" id="3S98"/>
<dbReference type="PDBsum" id="3SE3"/>
<dbReference type="PDBsum" id="3SE4"/>
<dbReference type="PDBsum" id="4PO6"/>
<dbReference type="PDBsum" id="8Y31"/>
<dbReference type="SMR" id="P17181"/>
<dbReference type="BioGRID" id="109676">
    <property type="interactions" value="56"/>
</dbReference>
<dbReference type="ComplexPortal" id="CPX-5995">
    <property type="entry name" value="Interferon alpha receptor-ligand complex, IFNA2 variant"/>
</dbReference>
<dbReference type="ComplexPortal" id="CPX-5996">
    <property type="entry name" value="Interferon alpha receptor-ligand complex, IFNA1 variant"/>
</dbReference>
<dbReference type="ComplexPortal" id="CPX-5997">
    <property type="entry name" value="Interferon alpha receptor-ligand complex, IFNA7 variant"/>
</dbReference>
<dbReference type="ComplexPortal" id="CPX-5998">
    <property type="entry name" value="Interferon alpha receptor-ligand complex, IFNA4 variant"/>
</dbReference>
<dbReference type="ComplexPortal" id="CPX-5999">
    <property type="entry name" value="Interferon alpha receptor-ligand complex, IFNA5 variant"/>
</dbReference>
<dbReference type="ComplexPortal" id="CPX-6000">
    <property type="entry name" value="Interferon alpha receptor-ligand complex, IFNA6 variant"/>
</dbReference>
<dbReference type="ComplexPortal" id="CPX-6001">
    <property type="entry name" value="Interferon alpha receptor-ligand complex, IFNA8 variant"/>
</dbReference>
<dbReference type="ComplexPortal" id="CPX-6002">
    <property type="entry name" value="Interferon alpha receptor-ligand complex, IFNA10 variant"/>
</dbReference>
<dbReference type="ComplexPortal" id="CPX-6003">
    <property type="entry name" value="Interferon alpha receptor-ligand complex, IFNA14 variant"/>
</dbReference>
<dbReference type="ComplexPortal" id="CPX-6004">
    <property type="entry name" value="Interferon alpha receptor-ligand complex, IFNA16 variant"/>
</dbReference>
<dbReference type="ComplexPortal" id="CPX-6005">
    <property type="entry name" value="Interferon alpha receptor-ligand complex, IFNA17 variant"/>
</dbReference>
<dbReference type="ComplexPortal" id="CPX-6006">
    <property type="entry name" value="Interferon alpha receptor-ligand complex, IFNA21 variant"/>
</dbReference>
<dbReference type="ComplexPortal" id="CPX-6007">
    <property type="entry name" value="Interferon beta receptor-ligand complex"/>
</dbReference>
<dbReference type="ComplexPortal" id="CPX-6008">
    <property type="entry name" value="Interferon epsilon receptor-ligand complex"/>
</dbReference>
<dbReference type="ComplexPortal" id="CPX-6009">
    <property type="entry name" value="Interferon kappa receptor-ligand complex"/>
</dbReference>
<dbReference type="ComplexPortal" id="CPX-6010">
    <property type="entry name" value="Interferon omega receptor-ligand complex"/>
</dbReference>
<dbReference type="CORUM" id="P17181"/>
<dbReference type="DIP" id="DIP-57N"/>
<dbReference type="ELM" id="P17181"/>
<dbReference type="FunCoup" id="P17181">
    <property type="interactions" value="1510"/>
</dbReference>
<dbReference type="IntAct" id="P17181">
    <property type="interactions" value="34"/>
</dbReference>
<dbReference type="MINT" id="P17181"/>
<dbReference type="STRING" id="9606.ENSP00000270139"/>
<dbReference type="BindingDB" id="P17181"/>
<dbReference type="ChEMBL" id="CHEMBL1887"/>
<dbReference type="DrugBank" id="DB11976">
    <property type="generic name" value="Anifrolumab"/>
</dbReference>
<dbReference type="DrugBank" id="DB14999">
    <property type="generic name" value="Human interferon beta"/>
</dbReference>
<dbReference type="DrugBank" id="DB05472">
    <property type="generic name" value="Human interferon omega-1"/>
</dbReference>
<dbReference type="DrugBank" id="DB05258">
    <property type="generic name" value="Interferon alfa"/>
</dbReference>
<dbReference type="DrugBank" id="DB00034">
    <property type="generic name" value="Interferon alfa-2a"/>
</dbReference>
<dbReference type="DrugBank" id="DB00105">
    <property type="generic name" value="Interferon alfa-2b"/>
</dbReference>
<dbReference type="DrugBank" id="DB00011">
    <property type="generic name" value="Interferon alfa-n1"/>
</dbReference>
<dbReference type="DrugBank" id="DB00018">
    <property type="generic name" value="Interferon alfa-n3"/>
</dbReference>
<dbReference type="DrugBank" id="DB00069">
    <property type="generic name" value="Interferon alfacon-1"/>
</dbReference>
<dbReference type="DrugBank" id="DB00060">
    <property type="generic name" value="Interferon beta-1a"/>
</dbReference>
<dbReference type="DrugBank" id="DB00068">
    <property type="generic name" value="Interferon beta-1b"/>
</dbReference>
<dbReference type="DrugBank" id="DB00008">
    <property type="generic name" value="Peginterferon alfa-2a"/>
</dbReference>
<dbReference type="DrugBank" id="DB00022">
    <property type="generic name" value="Peginterferon alfa-2b"/>
</dbReference>
<dbReference type="DrugBank" id="DB09122">
    <property type="generic name" value="Peginterferon beta-1a"/>
</dbReference>
<dbReference type="DrugBank" id="DB15119">
    <property type="generic name" value="Ropeginterferon alfa-2b"/>
</dbReference>
<dbReference type="DrugCentral" id="P17181"/>
<dbReference type="GuidetoPHARMACOLOGY" id="1723"/>
<dbReference type="TCDB" id="8.A.132.1.1">
    <property type="family name" value="the interferon/interleukin receptor (iir) family"/>
</dbReference>
<dbReference type="GlyConnect" id="1946">
    <property type="glycosylation" value="8 N-Linked glycans (6 sites)"/>
</dbReference>
<dbReference type="GlyCosmos" id="P17181">
    <property type="glycosylation" value="12 sites, 8 glycans"/>
</dbReference>
<dbReference type="GlyGen" id="P17181">
    <property type="glycosylation" value="14 sites, 13 N-linked glycans (8 sites)"/>
</dbReference>
<dbReference type="iPTMnet" id="P17181"/>
<dbReference type="PhosphoSitePlus" id="P17181"/>
<dbReference type="SwissPalm" id="P17181"/>
<dbReference type="BioMuta" id="IFNAR1"/>
<dbReference type="DMDM" id="90110827"/>
<dbReference type="jPOST" id="P17181"/>
<dbReference type="MassIVE" id="P17181"/>
<dbReference type="PaxDb" id="9606-ENSP00000270139"/>
<dbReference type="PeptideAtlas" id="P17181"/>
<dbReference type="ProteomicsDB" id="4722"/>
<dbReference type="ProteomicsDB" id="53460">
    <molecule id="P17181-1"/>
</dbReference>
<dbReference type="ProteomicsDB" id="53461">
    <molecule id="P17181-2"/>
</dbReference>
<dbReference type="ProteomicsDB" id="53462">
    <molecule id="P17181-3"/>
</dbReference>
<dbReference type="ABCD" id="P17181">
    <property type="antibodies" value="19 sequenced antibodies"/>
</dbReference>
<dbReference type="Antibodypedia" id="3016">
    <property type="antibodies" value="879 antibodies from 47 providers"/>
</dbReference>
<dbReference type="DNASU" id="3454"/>
<dbReference type="Ensembl" id="ENST00000270139.8">
    <molecule id="P17181-1"/>
    <property type="protein sequence ID" value="ENSP00000270139.3"/>
    <property type="gene ID" value="ENSG00000142166.15"/>
</dbReference>
<dbReference type="Ensembl" id="ENST00000652450.2">
    <molecule id="P17181-4"/>
    <property type="protein sequence ID" value="ENSP00000498654.1"/>
    <property type="gene ID" value="ENSG00000142166.15"/>
</dbReference>
<dbReference type="Ensembl" id="ENST00000700080.1">
    <molecule id="P17181-4"/>
    <property type="protein sequence ID" value="ENSP00000514785.1"/>
    <property type="gene ID" value="ENSG00000142166.15"/>
</dbReference>
<dbReference type="Ensembl" id="ENST00000703515.1">
    <molecule id="P17181-1"/>
    <property type="protein sequence ID" value="ENSP00000515348.1"/>
    <property type="gene ID" value="ENSG00000142166.15"/>
</dbReference>
<dbReference type="Ensembl" id="ENST00000703556.1">
    <molecule id="P17181-1"/>
    <property type="protein sequence ID" value="ENSP00000515372.1"/>
    <property type="gene ID" value="ENSG00000142166.15"/>
</dbReference>
<dbReference type="GeneID" id="3454"/>
<dbReference type="KEGG" id="hsa:3454"/>
<dbReference type="MANE-Select" id="ENST00000270139.8">
    <property type="protein sequence ID" value="ENSP00000270139.3"/>
    <property type="RefSeq nucleotide sequence ID" value="NM_000629.3"/>
    <property type="RefSeq protein sequence ID" value="NP_000620.2"/>
</dbReference>
<dbReference type="UCSC" id="uc002yrn.4">
    <molecule id="P17181-1"/>
    <property type="organism name" value="human"/>
</dbReference>
<dbReference type="AGR" id="HGNC:5432"/>
<dbReference type="CTD" id="3454"/>
<dbReference type="DisGeNET" id="3454"/>
<dbReference type="GeneCards" id="IFNAR1"/>
<dbReference type="HGNC" id="HGNC:5432">
    <property type="gene designation" value="IFNAR1"/>
</dbReference>
<dbReference type="HPA" id="ENSG00000142166">
    <property type="expression patterns" value="Low tissue specificity"/>
</dbReference>
<dbReference type="MalaCards" id="IFNAR1"/>
<dbReference type="MIM" id="107450">
    <property type="type" value="gene"/>
</dbReference>
<dbReference type="MIM" id="619935">
    <property type="type" value="phenotype"/>
</dbReference>
<dbReference type="neXtProt" id="NX_P17181"/>
<dbReference type="OpenTargets" id="ENSG00000142166"/>
<dbReference type="PharmGKB" id="PA29670"/>
<dbReference type="VEuPathDB" id="HostDB:ENSG00000142166"/>
<dbReference type="eggNOG" id="ENOG502RISU">
    <property type="taxonomic scope" value="Eukaryota"/>
</dbReference>
<dbReference type="GeneTree" id="ENSGT00940000158406"/>
<dbReference type="HOGENOM" id="CLU_035134_0_0_1"/>
<dbReference type="InParanoid" id="P17181"/>
<dbReference type="OMA" id="YCINTTV"/>
<dbReference type="OrthoDB" id="9944680at2759"/>
<dbReference type="PAN-GO" id="P17181">
    <property type="GO annotations" value="3 GO annotations based on evolutionary models"/>
</dbReference>
<dbReference type="PhylomeDB" id="P17181"/>
<dbReference type="PathwayCommons" id="P17181"/>
<dbReference type="Reactome" id="R-HSA-909733">
    <property type="pathway name" value="Interferon alpha/beta signaling"/>
</dbReference>
<dbReference type="Reactome" id="R-HSA-912694">
    <property type="pathway name" value="Regulation of IFNA/IFNB signaling"/>
</dbReference>
<dbReference type="Reactome" id="R-HSA-9679191">
    <property type="pathway name" value="Potential therapeutics for SARS"/>
</dbReference>
<dbReference type="Reactome" id="R-HSA-9705671">
    <property type="pathway name" value="SARS-CoV-2 activates/modulates innate and adaptive immune responses"/>
</dbReference>
<dbReference type="Reactome" id="R-HSA-9833109">
    <property type="pathway name" value="Evasion by RSV of host interferon responses"/>
</dbReference>
<dbReference type="SignaLink" id="P17181"/>
<dbReference type="SIGNOR" id="P17181"/>
<dbReference type="BioGRID-ORCS" id="3454">
    <property type="hits" value="20 hits in 1168 CRISPR screens"/>
</dbReference>
<dbReference type="ChiTaRS" id="IFNAR1">
    <property type="organism name" value="human"/>
</dbReference>
<dbReference type="EvolutionaryTrace" id="P17181"/>
<dbReference type="GeneWiki" id="IFNAR1"/>
<dbReference type="GenomeRNAi" id="3454"/>
<dbReference type="Pharos" id="P17181">
    <property type="development level" value="Tclin"/>
</dbReference>
<dbReference type="PRO" id="PR:P17181"/>
<dbReference type="Proteomes" id="UP000005640">
    <property type="component" value="Chromosome 21"/>
</dbReference>
<dbReference type="RNAct" id="P17181">
    <property type="molecule type" value="protein"/>
</dbReference>
<dbReference type="Bgee" id="ENSG00000142166">
    <property type="expression patterns" value="Expressed in monocyte and 172 other cell types or tissues"/>
</dbReference>
<dbReference type="ExpressionAtlas" id="P17181">
    <property type="expression patterns" value="baseline and differential"/>
</dbReference>
<dbReference type="GO" id="GO:0005770">
    <property type="term" value="C:late endosome"/>
    <property type="evidence" value="ECO:0007669"/>
    <property type="project" value="UniProtKB-SubCell"/>
</dbReference>
<dbReference type="GO" id="GO:0005764">
    <property type="term" value="C:lysosome"/>
    <property type="evidence" value="ECO:0007669"/>
    <property type="project" value="UniProtKB-SubCell"/>
</dbReference>
<dbReference type="GO" id="GO:0005886">
    <property type="term" value="C:plasma membrane"/>
    <property type="evidence" value="ECO:0000314"/>
    <property type="project" value="UniProtKB"/>
</dbReference>
<dbReference type="GO" id="GO:0043235">
    <property type="term" value="C:receptor complex"/>
    <property type="evidence" value="ECO:0000353"/>
    <property type="project" value="ComplexPortal"/>
</dbReference>
<dbReference type="GO" id="GO:0019955">
    <property type="term" value="F:cytokine binding"/>
    <property type="evidence" value="ECO:0000353"/>
    <property type="project" value="UniProtKB"/>
</dbReference>
<dbReference type="GO" id="GO:0008269">
    <property type="term" value="F:JAK pathway signal transduction adaptor activity"/>
    <property type="evidence" value="ECO:0000314"/>
    <property type="project" value="UniProt"/>
</dbReference>
<dbReference type="GO" id="GO:0019962">
    <property type="term" value="F:type I interferon binding"/>
    <property type="evidence" value="ECO:0000250"/>
    <property type="project" value="UniProtKB"/>
</dbReference>
<dbReference type="GO" id="GO:0004905">
    <property type="term" value="F:type I interferon receptor activity"/>
    <property type="evidence" value="ECO:0000314"/>
    <property type="project" value="UniProtKB"/>
</dbReference>
<dbReference type="GO" id="GO:0007259">
    <property type="term" value="P:cell surface receptor signaling pathway via JAK-STAT"/>
    <property type="evidence" value="ECO:0000314"/>
    <property type="project" value="UniProt"/>
</dbReference>
<dbReference type="GO" id="GO:0035457">
    <property type="term" value="P:cellular response to interferon-alpha"/>
    <property type="evidence" value="ECO:0000250"/>
    <property type="project" value="UniProtKB"/>
</dbReference>
<dbReference type="GO" id="GO:0035458">
    <property type="term" value="P:cellular response to interferon-beta"/>
    <property type="evidence" value="ECO:0000314"/>
    <property type="project" value="UniProt"/>
</dbReference>
<dbReference type="GO" id="GO:0098586">
    <property type="term" value="P:cellular response to virus"/>
    <property type="evidence" value="ECO:0000303"/>
    <property type="project" value="ComplexPortal"/>
</dbReference>
<dbReference type="GO" id="GO:1901857">
    <property type="term" value="P:positive regulation of cellular respiration"/>
    <property type="evidence" value="ECO:0000315"/>
    <property type="project" value="ARUK-UCL"/>
</dbReference>
<dbReference type="GO" id="GO:0032496">
    <property type="term" value="P:response to lipopolysaccharide"/>
    <property type="evidence" value="ECO:0000250"/>
    <property type="project" value="UniProtKB"/>
</dbReference>
<dbReference type="GO" id="GO:0009615">
    <property type="term" value="P:response to virus"/>
    <property type="evidence" value="ECO:0000304"/>
    <property type="project" value="ProtInc"/>
</dbReference>
<dbReference type="GO" id="GO:0060337">
    <property type="term" value="P:type I interferon-mediated signaling pathway"/>
    <property type="evidence" value="ECO:0000314"/>
    <property type="project" value="UniProtKB"/>
</dbReference>
<dbReference type="DisProt" id="DP02458"/>
<dbReference type="FunFam" id="2.60.40.10:FF:000842">
    <property type="entry name" value="Interferon receptor 1 isoform 4"/>
    <property type="match status" value="2"/>
</dbReference>
<dbReference type="FunFam" id="2.60.40.10:FF:001548">
    <property type="entry name" value="Interferon receptor 1 isoform 4"/>
    <property type="match status" value="1"/>
</dbReference>
<dbReference type="FunFam" id="2.60.40.10:FF:001563">
    <property type="entry name" value="Interferon receptor 1 isoform 4"/>
    <property type="match status" value="1"/>
</dbReference>
<dbReference type="Gene3D" id="2.60.40.10">
    <property type="entry name" value="Immunoglobulins"/>
    <property type="match status" value="4"/>
</dbReference>
<dbReference type="InterPro" id="IPR003961">
    <property type="entry name" value="FN3_dom"/>
</dbReference>
<dbReference type="InterPro" id="IPR036116">
    <property type="entry name" value="FN3_sf"/>
</dbReference>
<dbReference type="InterPro" id="IPR013783">
    <property type="entry name" value="Ig-like_fold"/>
</dbReference>
<dbReference type="InterPro" id="IPR015373">
    <property type="entry name" value="Interferon/interleukin_rcp_dom"/>
</dbReference>
<dbReference type="InterPro" id="IPR016669">
    <property type="entry name" value="Interferon_alpha/beta_rcpt-1"/>
</dbReference>
<dbReference type="InterPro" id="IPR050650">
    <property type="entry name" value="Type-II_Cytokine-TF_Rcpt"/>
</dbReference>
<dbReference type="PANTHER" id="PTHR20859:SF54">
    <property type="entry name" value="INTERFERON ALPHA_BETA RECEPTOR 1"/>
    <property type="match status" value="1"/>
</dbReference>
<dbReference type="PANTHER" id="PTHR20859">
    <property type="entry name" value="INTERFERON/INTERLEUKIN RECEPTOR"/>
    <property type="match status" value="1"/>
</dbReference>
<dbReference type="Pfam" id="PF09294">
    <property type="entry name" value="Interfer-bind"/>
    <property type="match status" value="2"/>
</dbReference>
<dbReference type="Pfam" id="PF01108">
    <property type="entry name" value="Tissue_fac"/>
    <property type="match status" value="1"/>
</dbReference>
<dbReference type="PIRSF" id="PIRSF016567">
    <property type="entry name" value="IFN_alpha/beta_recept-1"/>
    <property type="match status" value="1"/>
</dbReference>
<dbReference type="SUPFAM" id="SSF49265">
    <property type="entry name" value="Fibronectin type III"/>
    <property type="match status" value="4"/>
</dbReference>
<dbReference type="PROSITE" id="PS50853">
    <property type="entry name" value="FN3"/>
    <property type="match status" value="4"/>
</dbReference>
<evidence type="ECO:0000250" key="1">
    <source>
        <dbReference type="UniProtKB" id="P33896"/>
    </source>
</evidence>
<evidence type="ECO:0000255" key="2"/>
<evidence type="ECO:0000255" key="3">
    <source>
        <dbReference type="PROSITE-ProRule" id="PRU00316"/>
    </source>
</evidence>
<evidence type="ECO:0000256" key="4">
    <source>
        <dbReference type="SAM" id="MobiDB-lite"/>
    </source>
</evidence>
<evidence type="ECO:0000269" key="5">
    <source>
    </source>
</evidence>
<evidence type="ECO:0000269" key="6">
    <source>
    </source>
</evidence>
<evidence type="ECO:0000269" key="7">
    <source>
    </source>
</evidence>
<evidence type="ECO:0000269" key="8">
    <source>
    </source>
</evidence>
<evidence type="ECO:0000269" key="9">
    <source>
    </source>
</evidence>
<evidence type="ECO:0000269" key="10">
    <source>
    </source>
</evidence>
<evidence type="ECO:0000269" key="11">
    <source>
    </source>
</evidence>
<evidence type="ECO:0000269" key="12">
    <source>
    </source>
</evidence>
<evidence type="ECO:0000269" key="13">
    <source>
    </source>
</evidence>
<evidence type="ECO:0000269" key="14">
    <source>
    </source>
</evidence>
<evidence type="ECO:0000269" key="15">
    <source>
    </source>
</evidence>
<evidence type="ECO:0000269" key="16">
    <source>
    </source>
</evidence>
<evidence type="ECO:0000269" key="17">
    <source>
    </source>
</evidence>
<evidence type="ECO:0000269" key="18">
    <source>
    </source>
</evidence>
<evidence type="ECO:0000269" key="19">
    <source>
    </source>
</evidence>
<evidence type="ECO:0000269" key="20">
    <source>
    </source>
</evidence>
<evidence type="ECO:0000269" key="21">
    <source>
    </source>
</evidence>
<evidence type="ECO:0000269" key="22">
    <source>
    </source>
</evidence>
<evidence type="ECO:0000269" key="23">
    <source>
    </source>
</evidence>
<evidence type="ECO:0000269" key="24">
    <source>
    </source>
</evidence>
<evidence type="ECO:0000269" key="25">
    <source>
    </source>
</evidence>
<evidence type="ECO:0000269" key="26">
    <source ref="4"/>
</evidence>
<evidence type="ECO:0000269" key="27">
    <source ref="5"/>
</evidence>
<evidence type="ECO:0000303" key="28">
    <source>
    </source>
</evidence>
<evidence type="ECO:0000303" key="29">
    <source>
    </source>
</evidence>
<evidence type="ECO:0000305" key="30"/>
<evidence type="ECO:0000305" key="31">
    <source>
    </source>
</evidence>
<evidence type="ECO:0000305" key="32">
    <source>
    </source>
</evidence>
<evidence type="ECO:0000305" key="33">
    <source>
    </source>
</evidence>
<evidence type="ECO:0000305" key="34">
    <source>
    </source>
</evidence>
<evidence type="ECO:0007744" key="35">
    <source>
        <dbReference type="PDB" id="3S98"/>
    </source>
</evidence>
<evidence type="ECO:0007744" key="36">
    <source>
        <dbReference type="PDB" id="3SE3"/>
    </source>
</evidence>
<evidence type="ECO:0007744" key="37">
    <source>
        <dbReference type="PDB" id="3SE4"/>
    </source>
</evidence>
<evidence type="ECO:0007744" key="38">
    <source>
    </source>
</evidence>
<evidence type="ECO:0007744" key="39">
    <source>
    </source>
</evidence>
<evidence type="ECO:0007829" key="40">
    <source>
        <dbReference type="PDB" id="3S98"/>
    </source>
</evidence>
<evidence type="ECO:0007829" key="41">
    <source>
        <dbReference type="PDB" id="8Y31"/>
    </source>
</evidence>
<keyword id="KW-0002">3D-structure</keyword>
<keyword id="KW-0025">Alternative splicing</keyword>
<keyword id="KW-1003">Cell membrane</keyword>
<keyword id="KW-0225">Disease variant</keyword>
<keyword id="KW-1015">Disulfide bond</keyword>
<keyword id="KW-0967">Endosome</keyword>
<keyword id="KW-0325">Glycoprotein</keyword>
<keyword id="KW-1017">Isopeptide bond</keyword>
<keyword id="KW-0449">Lipoprotein</keyword>
<keyword id="KW-0458">Lysosome</keyword>
<keyword id="KW-0472">Membrane</keyword>
<keyword id="KW-0564">Palmitate</keyword>
<keyword id="KW-0597">Phosphoprotein</keyword>
<keyword id="KW-1267">Proteomics identification</keyword>
<keyword id="KW-0675">Receptor</keyword>
<keyword id="KW-1185">Reference proteome</keyword>
<keyword id="KW-0677">Repeat</keyword>
<keyword id="KW-0732">Signal</keyword>
<keyword id="KW-0812">Transmembrane</keyword>
<keyword id="KW-1133">Transmembrane helix</keyword>
<keyword id="KW-0832">Ubl conjugation</keyword>
<accession>P17181</accession>
<accession>B2R6L9</accession>
<accession>B4DNT3</accession>
<accession>D3DSF0</accession>
<accession>Q53GW9</accession>
<accession>Q53H11</accession>
<accession>Q6PKD7</accession>
<accession>Q7M4L2</accession>
<accession>Q8WTZ2</accession>
<proteinExistence type="evidence at protein level"/>
<name>INAR1_HUMAN</name>
<comment type="function">
    <text evidence="1 5 7 8 11 12 13 14 16 17 18 20 21 22 23 25">Together with IFNAR2, forms the heterodimeric receptor for type I interferons (including interferons alpha, beta, epsilon, omega and kappa) (PubMed:10049744, PubMed:14532120, PubMed:15337770, PubMed:2153461, PubMed:21854986, PubMed:24075985, PubMed:31270247, PubMed:33252644, PubMed:35442418, PubMed:7813427). Type I interferon binding activates the JAK-STAT signaling cascade, resulting in transcriptional activation or repression of interferon-regulated genes that encode the effectors of the interferon response (PubMed:10049744, PubMed:21854986, PubMed:7665574). Mechanistically, type I interferon-binding brings the IFNAR1 and IFNAR2 subunits into close proximity with one another, driving their associated Janus kinases (JAKs) (TYK2 bound to IFNAR1 and JAK1 bound to IFNAR2) to cross-phosphorylate one another (PubMed:21854986, PubMed:32972995, PubMed:7665574, PubMed:7813427). The activated kinases phosphorylate specific tyrosine residues on the intracellular domains of IFNAR1 and IFNAR2, forming docking sites for the STAT transcription factors (PubMed:21854986, PubMed:32972995, PubMed:7526154, PubMed:7665574, PubMed:7813427). STAT proteins are then phosphorylated by the JAKs, promoting their translocation into the nucleus to regulate expression of interferon-regulated genes (PubMed:19561067, PubMed:21854986, PubMed:32972995, PubMed:7665574, PubMed:7813427, PubMed:9121453). Can also act independently of IFNAR2: form an active IFNB1 receptor by itself and activate a signaling cascade that does not involve activation of the JAK-STAT pathway (By similarity).</text>
</comment>
<comment type="subunit">
    <text evidence="5 7 8 9 13 14 15 19 21 22 25">Heterodimer with IFNAR2; forming the receptor for type I interferon (PubMed:10049744, PubMed:21854986, PubMed:7665574). Interacts with TYK2 (PubMed:15337770, PubMed:24704786, PubMed:7526154). Interacts with STAT1 and STAT2; the interaction requires its phosphorylation at Tyr-466 (PubMed:9121453). Interacts (serine-phosphorylated form) with FBXW11, the substrate recognition component of a SCF (SKP1-CUL1-F-box protein) E3 ubiquitin-protein ligase complex (PubMed:14532120, PubMed:15337770, PubMed:18056411). Interacts with SHMT2; this promotes interaction with ABRAXAS2 and the BRISC complex (PubMed:24075985). Interacts with TRIM10; this interaction prevents association between IFNAR1 and TYK2 (PubMed:33811647).</text>
</comment>
<comment type="interaction">
    <interactant intactId="EBI-1547250">
        <id>P17181</id>
    </interactant>
    <interactant intactId="EBI-355189">
        <id>Q9UKB1</id>
        <label>FBXW11</label>
    </interactant>
    <organismsDiffer>false</organismsDiffer>
    <experiments>9</experiments>
</comment>
<comment type="interaction">
    <interactant intactId="EBI-1547250">
        <id>P17181</id>
    </interactant>
    <interactant intactId="EBI-3267258">
        <id>Q86VI4</id>
        <label>LAPTM4B</label>
    </interactant>
    <organismsDiffer>false</organismsDiffer>
    <experiments>3</experiments>
</comment>
<comment type="interaction">
    <interactant intactId="EBI-1547250">
        <id>P17181</id>
    </interactant>
    <interactant intactId="EBI-1057697">
        <id>P42224</id>
        <label>STAT1</label>
    </interactant>
    <organismsDiffer>false</organismsDiffer>
    <experiments>2</experiments>
</comment>
<comment type="interaction">
    <interactant intactId="EBI-1547250">
        <id>P17181</id>
    </interactant>
    <interactant intactId="EBI-1546963">
        <id>P52630</id>
        <label>STAT2</label>
    </interactant>
    <organismsDiffer>false</organismsDiffer>
    <experiments>5</experiments>
</comment>
<comment type="interaction">
    <interactant intactId="EBI-16099379">
        <id>P17181-1</id>
    </interactant>
    <interactant intactId="EBI-1383454">
        <id>P29597</id>
        <label>TYK2</label>
    </interactant>
    <organismsDiffer>false</organismsDiffer>
    <experiments>3</experiments>
</comment>
<comment type="subcellular location">
    <molecule>Isoform 1</molecule>
    <subcellularLocation>
        <location evidence="7 9 12 20 34">Cell membrane</location>
        <topology evidence="30">Single-pass type I membrane protein</topology>
    </subcellularLocation>
    <subcellularLocation>
        <location evidence="9 31">Late endosome</location>
    </subcellularLocation>
    <subcellularLocation>
        <location evidence="9 31">Lysosome</location>
    </subcellularLocation>
    <text evidence="7 9">Interferon binding triggers internalization of the receptor from the cell membrane into endosomes and then into lysosomes.</text>
</comment>
<comment type="alternative products">
    <event type="alternative splicing"/>
    <isoform>
        <id>P17181-1</id>
        <name>1</name>
        <sequence type="displayed"/>
    </isoform>
    <isoform>
        <id>P17181-2</id>
        <name>2</name>
        <name>Sol-1</name>
        <name>Soluble form 1</name>
        <sequence type="described" ref="VSP_029930 VSP_029931"/>
    </isoform>
    <isoform>
        <id>P17181-3</id>
        <name>3</name>
        <name>Sol-2</name>
        <name>Soluble form 2</name>
        <sequence type="described" ref="VSP_029928 VSP_029929"/>
    </isoform>
    <isoform>
        <id>P17181-4</id>
        <name>4</name>
        <sequence type="described" ref="VSP_055322"/>
    </isoform>
</comment>
<comment type="tissue specificity">
    <text evidence="24">IFN receptors are present in all tissues and even on the surface of most IFN-resistant cells. Isoform 1, isoform 2 and isoform 3 are expressed in the IFN-alpha sensitive myeloma cell line U266B1. Isoform 2 and isoform 3 are expressed in the IFN-alpha resistant myeloma cell line U266R. Isoform 1 is not expressed in IFN-alpha resistant myeloma cell line U266R.</text>
</comment>
<comment type="PTM">
    <text evidence="7 8 9 14">Ubiquitinated, leading to its internalization and degradation (PubMed:14532120, PubMed:15337770). Polyubiquitinated via 'Lys-48'-linked and 'Lys-63'-linked ubiquitin chains, leading to receptor internalization and lysosomal degradation (PubMed:18056411). The 'Lys-63'-linked ubiquitin chains are cleaved off by the BRISC complex (PubMed:24075985).</text>
</comment>
<comment type="PTM">
    <text evidence="5 7 8 21">Phosphorylated on tyrosine residues in response to interferon-binding: phosphorylation by TYK2 tyrosine kinase creates docking sites for STAT proteins (PubMed:10049744, PubMed:7526154). Phosphorylated on serine residues in response to interferon binding; this promotes interaction with FBXW11 and ubiquitination (PubMed:14532120, PubMed:15337770, PubMed:24075985).</text>
</comment>
<comment type="PTM">
    <text evidence="11">Palmitoylation at Cys-463 is required for the activation of STAT1 and STAT2.</text>
</comment>
<comment type="disease" evidence="16 18 20">
    <disease id="DI-06465">
        <name>Immunodeficiency 106, susceptibility to viral infections</name>
        <acronym>IMD106</acronym>
        <description>An autosomal recessive immunologic disorder characterized by increased susceptibility to viral infections beginning in infancy or early childhood. IMD106 affected individuals may demonstrate adverse reactions to vaccination with live attenuated viral vaccines, most notably measles, mumps and rubella (MMR) and yellow fever vaccines. A subset of IMD106 patients develop severe reactions, including excessive hyperinflammatory response, encephalopathy, acute respiratory distress syndrome, and multiorgan failure. IMD106 may also predispose to severe respiratory infection with SARS-CoV-2.</description>
        <dbReference type="MIM" id="619935"/>
    </disease>
    <text>Disease susceptibility is associated with variants affecting the gene represented in this entry.</text>
</comment>
<comment type="miscellaneous">
    <molecule>Isoform 2</molecule>
    <text evidence="30">Incomplete sequence.</text>
</comment>
<comment type="miscellaneous">
    <molecule>Isoform 3</molecule>
    <text evidence="30">Incomplete sequence.</text>
</comment>
<comment type="similarity">
    <text evidence="30">Belongs to the type II cytokine receptor family.</text>
</comment>
<comment type="sequence caution" evidence="30">
    <conflict type="miscellaneous discrepancy">
        <sequence resource="EMBL-CDS" id="AAH02590"/>
    </conflict>
    <text>Contaminating sequence. Potential poly-A sequence.</text>
</comment>
<gene>
    <name type="primary">IFNAR1</name>
    <name type="synonym">IFNAR</name>
</gene>
<feature type="signal peptide" evidence="2">
    <location>
        <begin position="1"/>
        <end position="27"/>
    </location>
</feature>
<feature type="chain" id="PRO_0000011001" description="Interferon alpha/beta receptor 1">
    <location>
        <begin position="28"/>
        <end position="557"/>
    </location>
</feature>
<feature type="topological domain" description="Extracellular" evidence="2">
    <location>
        <begin position="28"/>
        <end position="436"/>
    </location>
</feature>
<feature type="transmembrane region" description="Helical" evidence="2">
    <location>
        <begin position="437"/>
        <end position="457"/>
    </location>
</feature>
<feature type="topological domain" description="Cytoplasmic" evidence="2">
    <location>
        <begin position="458"/>
        <end position="557"/>
    </location>
</feature>
<feature type="domain" description="Fibronectin type-III 1" evidence="3">
    <location>
        <begin position="32"/>
        <end position="126"/>
    </location>
</feature>
<feature type="domain" description="Fibronectin type-III 2" evidence="3">
    <location>
        <begin position="127"/>
        <end position="227"/>
    </location>
</feature>
<feature type="domain" description="Fibronectin type-III 3" evidence="3">
    <location>
        <begin position="231"/>
        <end position="329"/>
    </location>
</feature>
<feature type="domain" description="Fibronectin type-III 4" evidence="3">
    <location>
        <begin position="331"/>
        <end position="432"/>
    </location>
</feature>
<feature type="region of interest" description="Important for interaction with TYK2" evidence="15">
    <location>
        <begin position="491"/>
        <end position="500"/>
    </location>
</feature>
<feature type="region of interest" description="Disordered" evidence="4">
    <location>
        <begin position="516"/>
        <end position="557"/>
    </location>
</feature>
<feature type="compositionally biased region" description="Polar residues" evidence="4">
    <location>
        <begin position="528"/>
        <end position="539"/>
    </location>
</feature>
<feature type="modified residue" description="Phosphotyrosine; by TYK2" evidence="33">
    <location>
        <position position="466"/>
    </location>
</feature>
<feature type="modified residue" description="Phosphotyrosine; by TYK2" evidence="33">
    <location>
        <position position="481"/>
    </location>
</feature>
<feature type="modified residue" description="Phosphoserine" evidence="38 39">
    <location>
        <position position="495"/>
    </location>
</feature>
<feature type="modified residue" description="Phosphoserine" evidence="7 8 9 14">
    <location>
        <position position="535"/>
    </location>
</feature>
<feature type="lipid moiety-binding region" description="S-palmitoyl cysteine" evidence="11">
    <location>
        <position position="463"/>
    </location>
</feature>
<feature type="glycosylation site" description="N-linked (GlcNAc...) asparagine" evidence="2">
    <location>
        <position position="50"/>
    </location>
</feature>
<feature type="glycosylation site" description="N-linked (GlcNAc...) asparagine" evidence="10">
    <location>
        <position position="58"/>
    </location>
</feature>
<feature type="glycosylation site" description="N-linked (GlcNAc...) asparagine" evidence="2">
    <location>
        <position position="81"/>
    </location>
</feature>
<feature type="glycosylation site" description="N-linked (GlcNAc...) asparagine" evidence="2">
    <location>
        <position position="88"/>
    </location>
</feature>
<feature type="glycosylation site" description="N-linked (GlcNAc...) asparagine" evidence="10">
    <location>
        <position position="110"/>
    </location>
</feature>
<feature type="glycosylation site" description="N-linked (GlcNAc...) asparagine" evidence="13 35">
    <location>
        <position position="172"/>
    </location>
</feature>
<feature type="glycosylation site" description="N-linked (GlcNAc...) asparagine" evidence="2">
    <location>
        <position position="254"/>
    </location>
</feature>
<feature type="glycosylation site" description="N-linked (GlcNAc...) asparagine" evidence="10">
    <location>
        <position position="313"/>
    </location>
</feature>
<feature type="glycosylation site" description="N-linked (GlcNAc...) asparagine" evidence="2">
    <location>
        <position position="314"/>
    </location>
</feature>
<feature type="glycosylation site" description="N-linked (GlcNAc...) asparagine" evidence="2">
    <location>
        <position position="376"/>
    </location>
</feature>
<feature type="glycosylation site" description="N-linked (GlcNAc...) asparagine" evidence="2">
    <location>
        <position position="416"/>
    </location>
</feature>
<feature type="glycosylation site" description="N-linked (GlcNAc...) asparagine" evidence="2">
    <location>
        <position position="433"/>
    </location>
</feature>
<feature type="disulfide bond" evidence="13 35 36 37">
    <location>
        <begin position="79"/>
        <end position="87"/>
    </location>
</feature>
<feature type="disulfide bond" evidence="13 35 36 37">
    <location>
        <begin position="199"/>
        <end position="220"/>
    </location>
</feature>
<feature type="disulfide bond" evidence="13 35 36 37">
    <location>
        <begin position="283"/>
        <end position="291"/>
    </location>
</feature>
<feature type="disulfide bond" evidence="1">
    <location>
        <begin position="403"/>
        <end position="426"/>
    </location>
</feature>
<feature type="cross-link" description="Glycyl lysine isopeptide (Lys-Gly) (interchain with G-Cter in ubiquitin)" evidence="32">
    <location>
        <position position="501"/>
    </location>
</feature>
<feature type="cross-link" description="Glycyl lysine isopeptide (Lys-Gly) (interchain with G-Cter in ubiquitin)" evidence="32">
    <location>
        <position position="525"/>
    </location>
</feature>
<feature type="cross-link" description="Glycyl lysine isopeptide (Lys-Gly) (interchain with G-Cter in ubiquitin)" evidence="32">
    <location>
        <position position="526"/>
    </location>
</feature>
<feature type="splice variant" id="VSP_055322" description="In isoform 4." evidence="28">
    <location>
        <begin position="1"/>
        <end position="69"/>
    </location>
</feature>
<feature type="splice variant" id="VSP_029928" description="In isoform 3." evidence="29">
    <location>
        <begin position="414"/>
        <end position="421"/>
    </location>
</feature>
<feature type="splice variant" id="VSP_029929" description="In isoform 3." evidence="29">
    <location>
        <begin position="428"/>
        <end position="480"/>
    </location>
</feature>
<feature type="splice variant" id="VSP_029930" description="In isoform 2." evidence="29">
    <original>KTKPGNT</original>
    <variation>NISLNSH</variation>
    <location>
        <begin position="428"/>
        <end position="434"/>
    </location>
</feature>
<feature type="splice variant" id="VSP_029931" description="In isoform 2." evidence="29">
    <location>
        <begin position="435"/>
        <end position="557"/>
    </location>
</feature>
<feature type="sequence variant" id="VAR_084085" description="No effect on activation of STAT1 upon IFNA2 or IFNG binding; dbSNP:rs779701967." evidence="17">
    <original>A</original>
    <variation>V</variation>
    <location>
        <position position="24"/>
    </location>
</feature>
<feature type="sequence variant" id="VAR_084086" description="No effect on activation of STAT1 upon IFNA2 or IFNG binding; dbSNP:rs201532160." evidence="17">
    <original>G</original>
    <variation>R</variation>
    <location>
        <position position="57"/>
    </location>
</feature>
<feature type="sequence variant" id="VAR_084087" description="Abolished STAT1 activation upon IFNA2 binding but no effect upon IFNG binding; dbSNP:rs181939581." evidence="17">
    <original>W</original>
    <variation>C</variation>
    <location>
        <position position="73"/>
    </location>
</feature>
<feature type="sequence variant" id="VAR_084088" description="No effect on activation of STAT1 upon IFNA2 or IFNG binding IFNG binding; dbSNP:rs1333470928." evidence="17">
    <original>Q</original>
    <variation>H</variation>
    <location>
        <position position="80"/>
    </location>
</feature>
<feature type="sequence variant" id="VAR_084089" description="No effect on activation of STAT1 upon IFNA2 or IFNG binding." evidence="17">
    <original>T</original>
    <variation>A</variation>
    <location>
        <position position="83"/>
    </location>
</feature>
<feature type="sequence variant" id="VAR_084090" description="No effect on activation of STAT1 upon IFNA2 or IFNG binding; dbSNP:rs577823502." evidence="17">
    <original>N</original>
    <variation>S</variation>
    <location>
        <position position="88"/>
    </location>
</feature>
<feature type="sequence variant" id="VAR_002717" description="In dbSNP:rs2257167." evidence="6 12 26">
    <original>V</original>
    <variation>L</variation>
    <location>
        <position position="168"/>
    </location>
</feature>
<feature type="sequence variant" id="VAR_084091" description="No effect on activation of STAT1 upon IFNA2 or IFNG binding; dbSNP:rs747690835." evidence="17">
    <original>I</original>
    <variation>M</variation>
    <location>
        <position position="169"/>
    </location>
</feature>
<feature type="sequence variant" id="VAR_084092" description="No effect on activation of STAT1 upon IFNA2 or IFNG binding; dbSNP:rs770624214." evidence="17">
    <original>I</original>
    <variation>V</variation>
    <location>
        <position position="183"/>
    </location>
</feature>
<feature type="sequence variant" id="VAR_087556" description="In IMD106; decreased protein abundance." evidence="16">
    <location>
        <begin position="261"/>
        <end position="557"/>
    </location>
</feature>
<feature type="sequence variant" id="VAR_084093" description="No effect on activation of STAT1 upon IFNA2 or IFNG binding; dbSNP:rs201281365." evidence="17">
    <original>R</original>
    <variation>C</variation>
    <location>
        <position position="306"/>
    </location>
</feature>
<feature type="sequence variant" id="VAR_020502" description="No effect on activation of STAT1 upon IFNA2 or IFNG binding; dbSNP:rs17875833." evidence="17 27">
    <original>V</original>
    <variation>I</variation>
    <location>
        <position position="307"/>
    </location>
</feature>
<feature type="sequence variant" id="VAR_087557" description="In IMD106; no protein detected in homozygous patient cells; loss of type I interferon receptor activity." evidence="18">
    <location>
        <begin position="308"/>
        <end position="557"/>
    </location>
</feature>
<feature type="sequence variant" id="VAR_084094" description="Decreased STAT1 activation upon IFNA2 binding but no effect upon IFNG binding." evidence="17">
    <location>
        <position position="335"/>
    </location>
</feature>
<feature type="sequence variant" id="VAR_020503" description="In dbSNP:rs17875834." evidence="27">
    <original>T</original>
    <variation>M</variation>
    <location>
        <position position="359"/>
    </location>
</feature>
<feature type="sequence variant" id="VAR_087558" description="In IMD106; loss of localization at the plasma membrane; loss of type I interferon receptor activity." evidence="20">
    <location>
        <begin position="386"/>
        <end position="557"/>
    </location>
</feature>
<feature type="sequence variant" id="VAR_084095" description="No effect on activation of STAT1 upon IFNA2 or IFNG binding; requires 2 nucleotide substitutions." evidence="17">
    <original>E</original>
    <variation>L</variation>
    <location>
        <position position="386"/>
    </location>
</feature>
<feature type="sequence variant" id="VAR_084096" description="Abolished STAT1 activation upon IFNA2 binding but no effect upon IFNG binding; dbSNP:rs746291558." evidence="17">
    <original>S</original>
    <variation>R</variation>
    <location>
        <position position="422"/>
    </location>
</feature>
<feature type="sequence variant" id="VAR_084097" description="No effect on activation of STAT1 upon IFNA2 or IFNG binding; dbSNP:rs541858922." evidence="17">
    <original>A</original>
    <variation>T</variation>
    <location>
        <position position="424"/>
    </location>
</feature>
<feature type="sequence variant" id="VAR_084098" description="No effect on activation of STAT1 upon IFNA2 or IFNG binding; dbSNP:rs778182995." evidence="17">
    <original>E</original>
    <variation>K</variation>
    <location>
        <position position="515"/>
    </location>
</feature>
<feature type="mutagenesis site" description="Impairs internalization in response to interferon." evidence="9">
    <original>Y</original>
    <variation>F</variation>
    <location>
        <position position="466"/>
    </location>
</feature>
<feature type="mutagenesis site" description="Impairs interaction with TYK2." evidence="15">
    <original>LL</original>
    <variation>AA</variation>
    <location>
        <begin position="491"/>
        <end position="492"/>
    </location>
</feature>
<feature type="mutagenesis site" description="Impairs interaction with TYK2." evidence="15">
    <original>EE</original>
    <variation>AA</variation>
    <location>
        <begin position="496"/>
        <end position="497"/>
    </location>
</feature>
<feature type="mutagenesis site" description="Impairs interaction with TYK2." evidence="15">
    <original>E</original>
    <variation>A</variation>
    <location>
        <position position="500"/>
    </location>
</feature>
<feature type="mutagenesis site" description="Mildly reduces ubiquitination. Nearly abolishes ubiquitination and subsequent degradation; when associated with 525-R-R-526." evidence="8">
    <original>K</original>
    <variation>R</variation>
    <location>
        <position position="501"/>
    </location>
</feature>
<feature type="mutagenesis site" description="Reduces ubiquitination. Nearly abolishes ubiquitination and subsequent degradation; when associated with R-501." evidence="8">
    <original>KK</original>
    <variation>RR</variation>
    <location>
        <begin position="525"/>
        <end position="526"/>
    </location>
</feature>
<feature type="mutagenesis site" description="Abolishes interaction with FBXW11 and decreases ubiquitination." evidence="7 8">
    <original>S</original>
    <variation>A</variation>
    <location>
        <position position="535"/>
    </location>
</feature>
<feature type="mutagenesis site" description="Abolishes phosphorylation at this site and interaction with SHMT2." evidence="14">
    <original>S</original>
    <variation>A</variation>
    <location>
        <position position="535"/>
    </location>
</feature>
<feature type="mutagenesis site" description="Abolishes interaction with FBXW11 and decreases ubiquitination." evidence="8">
    <original>S</original>
    <variation>A</variation>
    <location>
        <position position="539"/>
    </location>
</feature>
<feature type="sequence conflict" description="In Ref. 1; AAA52730." evidence="30" ref="1">
    <original>A</original>
    <variation>G</variation>
    <location>
        <position position="17"/>
    </location>
</feature>
<feature type="sequence conflict" description="In Ref. 4; BAD96532." evidence="30" ref="4">
    <original>V</original>
    <variation>M</variation>
    <location>
        <position position="59"/>
    </location>
</feature>
<feature type="sequence conflict" description="In Ref. 4; BAD96532." evidence="30" ref="4">
    <original>Q</original>
    <variation>R</variation>
    <location>
        <position position="279"/>
    </location>
</feature>
<feature type="sequence conflict" description="In Ref. 3; BAG35516." evidence="30" ref="3">
    <original>D</original>
    <variation>G</variation>
    <location>
        <position position="344"/>
    </location>
</feature>
<feature type="sequence conflict" description="In Ref. 4; BAD96532." evidence="30" ref="4">
    <original>D</original>
    <variation>N</variation>
    <location>
        <position position="479"/>
    </location>
</feature>
<feature type="strand" evidence="40">
    <location>
        <begin position="37"/>
        <end position="41"/>
    </location>
</feature>
<feature type="strand" evidence="40">
    <location>
        <begin position="44"/>
        <end position="48"/>
    </location>
</feature>
<feature type="strand" evidence="40">
    <location>
        <begin position="60"/>
        <end position="69"/>
    </location>
</feature>
<feature type="strand" evidence="40">
    <location>
        <begin position="80"/>
        <end position="88"/>
    </location>
</feature>
<feature type="strand" evidence="40">
    <location>
        <begin position="100"/>
        <end position="107"/>
    </location>
</feature>
<feature type="strand" evidence="40">
    <location>
        <begin position="112"/>
        <end position="116"/>
    </location>
</feature>
<feature type="helix" evidence="40">
    <location>
        <begin position="122"/>
        <end position="125"/>
    </location>
</feature>
<feature type="strand" evidence="40">
    <location>
        <begin position="132"/>
        <end position="137"/>
    </location>
</feature>
<feature type="strand" evidence="40">
    <location>
        <begin position="142"/>
        <end position="147"/>
    </location>
</feature>
<feature type="strand" evidence="40">
    <location>
        <begin position="164"/>
        <end position="171"/>
    </location>
</feature>
<feature type="turn" evidence="40">
    <location>
        <begin position="172"/>
        <end position="174"/>
    </location>
</feature>
<feature type="strand" evidence="40">
    <location>
        <begin position="178"/>
        <end position="183"/>
    </location>
</feature>
<feature type="strand" evidence="40">
    <location>
        <begin position="186"/>
        <end position="189"/>
    </location>
</feature>
<feature type="strand" evidence="40">
    <location>
        <begin position="197"/>
        <end position="206"/>
    </location>
</feature>
<feature type="helix" evidence="40">
    <location>
        <begin position="207"/>
        <end position="209"/>
    </location>
</feature>
<feature type="strand" evidence="40">
    <location>
        <begin position="219"/>
        <end position="222"/>
    </location>
</feature>
<feature type="strand" evidence="40">
    <location>
        <begin position="233"/>
        <end position="240"/>
    </location>
</feature>
<feature type="strand" evidence="40">
    <location>
        <begin position="243"/>
        <end position="249"/>
    </location>
</feature>
<feature type="strand" evidence="40">
    <location>
        <begin position="251"/>
        <end position="254"/>
    </location>
</feature>
<feature type="strand" evidence="40">
    <location>
        <begin position="256"/>
        <end position="263"/>
    </location>
</feature>
<feature type="helix" evidence="40">
    <location>
        <begin position="264"/>
        <end position="267"/>
    </location>
</feature>
<feature type="turn" evidence="41">
    <location>
        <begin position="268"/>
        <end position="270"/>
    </location>
</feature>
<feature type="helix" evidence="40">
    <location>
        <begin position="281"/>
        <end position="283"/>
    </location>
</feature>
<feature type="strand" evidence="40">
    <location>
        <begin position="286"/>
        <end position="294"/>
    </location>
</feature>
<feature type="helix" evidence="40">
    <location>
        <begin position="295"/>
        <end position="297"/>
    </location>
</feature>
<feature type="strand" evidence="40">
    <location>
        <begin position="300"/>
        <end position="310"/>
    </location>
</feature>
<feature type="strand" evidence="40">
    <location>
        <begin position="322"/>
        <end position="325"/>
    </location>
</feature>
<reference key="1">
    <citation type="journal article" date="1990" name="Cell">
        <title>Genetic transfer of a functional human interferon alpha receptor into mouse cells: cloning and expression of its cDNA.</title>
        <authorList>
            <person name="Uze G."/>
            <person name="Lutfalla G."/>
            <person name="Gresser I."/>
        </authorList>
    </citation>
    <scope>NUCLEOTIDE SEQUENCE [MRNA] (ISOFORM 1)</scope>
    <scope>VARIANT LEU-168</scope>
    <scope>FUNCTION</scope>
    <scope>SUBCELLULAR LOCATION</scope>
</reference>
<reference key="2">
    <citation type="journal article" date="1992" name="J. Biol. Chem.">
        <title>The structure of the human interferon alpha/beta receptor gene.</title>
        <authorList>
            <person name="Lutfalla G."/>
            <person name="Gardiner K."/>
            <person name="Proudhon D."/>
            <person name="Vielh E."/>
            <person name="Uze G."/>
        </authorList>
    </citation>
    <scope>NUCLEOTIDE SEQUENCE [GENOMIC DNA]</scope>
    <scope>VARIANT LEU-168</scope>
</reference>
<reference key="3">
    <citation type="journal article" date="2004" name="Nat. Genet.">
        <title>Complete sequencing and characterization of 21,243 full-length human cDNAs.</title>
        <authorList>
            <person name="Ota T."/>
            <person name="Suzuki Y."/>
            <person name="Nishikawa T."/>
            <person name="Otsuki T."/>
            <person name="Sugiyama T."/>
            <person name="Irie R."/>
            <person name="Wakamatsu A."/>
            <person name="Hayashi K."/>
            <person name="Sato H."/>
            <person name="Nagai K."/>
            <person name="Kimura K."/>
            <person name="Makita H."/>
            <person name="Sekine M."/>
            <person name="Obayashi M."/>
            <person name="Nishi T."/>
            <person name="Shibahara T."/>
            <person name="Tanaka T."/>
            <person name="Ishii S."/>
            <person name="Yamamoto J."/>
            <person name="Saito K."/>
            <person name="Kawai Y."/>
            <person name="Isono Y."/>
            <person name="Nakamura Y."/>
            <person name="Nagahari K."/>
            <person name="Murakami K."/>
            <person name="Yasuda T."/>
            <person name="Iwayanagi T."/>
            <person name="Wagatsuma M."/>
            <person name="Shiratori A."/>
            <person name="Sudo H."/>
            <person name="Hosoiri T."/>
            <person name="Kaku Y."/>
            <person name="Kodaira H."/>
            <person name="Kondo H."/>
            <person name="Sugawara M."/>
            <person name="Takahashi M."/>
            <person name="Kanda K."/>
            <person name="Yokoi T."/>
            <person name="Furuya T."/>
            <person name="Kikkawa E."/>
            <person name="Omura Y."/>
            <person name="Abe K."/>
            <person name="Kamihara K."/>
            <person name="Katsuta N."/>
            <person name="Sato K."/>
            <person name="Tanikawa M."/>
            <person name="Yamazaki M."/>
            <person name="Ninomiya K."/>
            <person name="Ishibashi T."/>
            <person name="Yamashita H."/>
            <person name="Murakawa K."/>
            <person name="Fujimori K."/>
            <person name="Tanai H."/>
            <person name="Kimata M."/>
            <person name="Watanabe M."/>
            <person name="Hiraoka S."/>
            <person name="Chiba Y."/>
            <person name="Ishida S."/>
            <person name="Ono Y."/>
            <person name="Takiguchi S."/>
            <person name="Watanabe S."/>
            <person name="Yosida M."/>
            <person name="Hotuta T."/>
            <person name="Kusano J."/>
            <person name="Kanehori K."/>
            <person name="Takahashi-Fujii A."/>
            <person name="Hara H."/>
            <person name="Tanase T.-O."/>
            <person name="Nomura Y."/>
            <person name="Togiya S."/>
            <person name="Komai F."/>
            <person name="Hara R."/>
            <person name="Takeuchi K."/>
            <person name="Arita M."/>
            <person name="Imose N."/>
            <person name="Musashino K."/>
            <person name="Yuuki H."/>
            <person name="Oshima A."/>
            <person name="Sasaki N."/>
            <person name="Aotsuka S."/>
            <person name="Yoshikawa Y."/>
            <person name="Matsunawa H."/>
            <person name="Ichihara T."/>
            <person name="Shiohata N."/>
            <person name="Sano S."/>
            <person name="Moriya S."/>
            <person name="Momiyama H."/>
            <person name="Satoh N."/>
            <person name="Takami S."/>
            <person name="Terashima Y."/>
            <person name="Suzuki O."/>
            <person name="Nakagawa S."/>
            <person name="Senoh A."/>
            <person name="Mizoguchi H."/>
            <person name="Goto Y."/>
            <person name="Shimizu F."/>
            <person name="Wakebe H."/>
            <person name="Hishigaki H."/>
            <person name="Watanabe T."/>
            <person name="Sugiyama A."/>
            <person name="Takemoto M."/>
            <person name="Kawakami B."/>
            <person name="Yamazaki M."/>
            <person name="Watanabe K."/>
            <person name="Kumagai A."/>
            <person name="Itakura S."/>
            <person name="Fukuzumi Y."/>
            <person name="Fujimori Y."/>
            <person name="Komiyama M."/>
            <person name="Tashiro H."/>
            <person name="Tanigami A."/>
            <person name="Fujiwara T."/>
            <person name="Ono T."/>
            <person name="Yamada K."/>
            <person name="Fujii Y."/>
            <person name="Ozaki K."/>
            <person name="Hirao M."/>
            <person name="Ohmori Y."/>
            <person name="Kawabata A."/>
            <person name="Hikiji T."/>
            <person name="Kobatake N."/>
            <person name="Inagaki H."/>
            <person name="Ikema Y."/>
            <person name="Okamoto S."/>
            <person name="Okitani R."/>
            <person name="Kawakami T."/>
            <person name="Noguchi S."/>
            <person name="Itoh T."/>
            <person name="Shigeta K."/>
            <person name="Senba T."/>
            <person name="Matsumura K."/>
            <person name="Nakajima Y."/>
            <person name="Mizuno T."/>
            <person name="Morinaga M."/>
            <person name="Sasaki M."/>
            <person name="Togashi T."/>
            <person name="Oyama M."/>
            <person name="Hata H."/>
            <person name="Watanabe M."/>
            <person name="Komatsu T."/>
            <person name="Mizushima-Sugano J."/>
            <person name="Satoh T."/>
            <person name="Shirai Y."/>
            <person name="Takahashi Y."/>
            <person name="Nakagawa K."/>
            <person name="Okumura K."/>
            <person name="Nagase T."/>
            <person name="Nomura N."/>
            <person name="Kikuchi H."/>
            <person name="Masuho Y."/>
            <person name="Yamashita R."/>
            <person name="Nakai K."/>
            <person name="Yada T."/>
            <person name="Nakamura Y."/>
            <person name="Ohara O."/>
            <person name="Isogai T."/>
            <person name="Sugano S."/>
        </authorList>
    </citation>
    <scope>NUCLEOTIDE SEQUENCE [LARGE SCALE MRNA] (ISOFORMS 1 AND 4)</scope>
    <source>
        <tissue>Lung</tissue>
    </source>
</reference>
<reference key="4">
    <citation type="submission" date="2005-04" db="EMBL/GenBank/DDBJ databases">
        <authorList>
            <person name="Suzuki Y."/>
            <person name="Sugano S."/>
            <person name="Totoki Y."/>
            <person name="Toyoda A."/>
            <person name="Takeda T."/>
            <person name="Sakaki Y."/>
            <person name="Tanaka A."/>
            <person name="Yokoyama S."/>
        </authorList>
    </citation>
    <scope>NUCLEOTIDE SEQUENCE [LARGE SCALE MRNA] (ISOFORM 1)</scope>
    <scope>VARIANT LEU-168</scope>
    <source>
        <tissue>Liver</tissue>
    </source>
</reference>
<reference key="5">
    <citation type="submission" date="2004-06" db="EMBL/GenBank/DDBJ databases">
        <authorList>
            <consortium name="SeattleSNPs variation discovery resource"/>
        </authorList>
    </citation>
    <scope>NUCLEOTIDE SEQUENCE [GENOMIC DNA]</scope>
    <scope>VARIANTS ILE-307 AND MET-359</scope>
</reference>
<reference key="6">
    <citation type="journal article" date="2000" name="Nature">
        <title>The DNA sequence of human chromosome 21.</title>
        <authorList>
            <person name="Hattori M."/>
            <person name="Fujiyama A."/>
            <person name="Taylor T.D."/>
            <person name="Watanabe H."/>
            <person name="Yada T."/>
            <person name="Park H.-S."/>
            <person name="Toyoda A."/>
            <person name="Ishii K."/>
            <person name="Totoki Y."/>
            <person name="Choi D.-K."/>
            <person name="Groner Y."/>
            <person name="Soeda E."/>
            <person name="Ohki M."/>
            <person name="Takagi T."/>
            <person name="Sakaki Y."/>
            <person name="Taudien S."/>
            <person name="Blechschmidt K."/>
            <person name="Polley A."/>
            <person name="Menzel U."/>
            <person name="Delabar J."/>
            <person name="Kumpf K."/>
            <person name="Lehmann R."/>
            <person name="Patterson D."/>
            <person name="Reichwald K."/>
            <person name="Rump A."/>
            <person name="Schillhabel M."/>
            <person name="Schudy A."/>
            <person name="Zimmermann W."/>
            <person name="Rosenthal A."/>
            <person name="Kudoh J."/>
            <person name="Shibuya K."/>
            <person name="Kawasaki K."/>
            <person name="Asakawa S."/>
            <person name="Shintani A."/>
            <person name="Sasaki T."/>
            <person name="Nagamine K."/>
            <person name="Mitsuyama S."/>
            <person name="Antonarakis S.E."/>
            <person name="Minoshima S."/>
            <person name="Shimizu N."/>
            <person name="Nordsiek G."/>
            <person name="Hornischer K."/>
            <person name="Brandt P."/>
            <person name="Scharfe M."/>
            <person name="Schoen O."/>
            <person name="Desario A."/>
            <person name="Reichelt J."/>
            <person name="Kauer G."/>
            <person name="Bloecker H."/>
            <person name="Ramser J."/>
            <person name="Beck A."/>
            <person name="Klages S."/>
            <person name="Hennig S."/>
            <person name="Riesselmann L."/>
            <person name="Dagand E."/>
            <person name="Wehrmeyer S."/>
            <person name="Borzym K."/>
            <person name="Gardiner K."/>
            <person name="Nizetic D."/>
            <person name="Francis F."/>
            <person name="Lehrach H."/>
            <person name="Reinhardt R."/>
            <person name="Yaspo M.-L."/>
        </authorList>
    </citation>
    <scope>NUCLEOTIDE SEQUENCE [LARGE SCALE GENOMIC DNA]</scope>
</reference>
<reference key="7">
    <citation type="submission" date="2005-09" db="EMBL/GenBank/DDBJ databases">
        <authorList>
            <person name="Mural R.J."/>
            <person name="Istrail S."/>
            <person name="Sutton G.G."/>
            <person name="Florea L."/>
            <person name="Halpern A.L."/>
            <person name="Mobarry C.M."/>
            <person name="Lippert R."/>
            <person name="Walenz B."/>
            <person name="Shatkay H."/>
            <person name="Dew I."/>
            <person name="Miller J.R."/>
            <person name="Flanigan M.J."/>
            <person name="Edwards N.J."/>
            <person name="Bolanos R."/>
            <person name="Fasulo D."/>
            <person name="Halldorsson B.V."/>
            <person name="Hannenhalli S."/>
            <person name="Turner R."/>
            <person name="Yooseph S."/>
            <person name="Lu F."/>
            <person name="Nusskern D.R."/>
            <person name="Shue B.C."/>
            <person name="Zheng X.H."/>
            <person name="Zhong F."/>
            <person name="Delcher A.L."/>
            <person name="Huson D.H."/>
            <person name="Kravitz S.A."/>
            <person name="Mouchard L."/>
            <person name="Reinert K."/>
            <person name="Remington K.A."/>
            <person name="Clark A.G."/>
            <person name="Waterman M.S."/>
            <person name="Eichler E.E."/>
            <person name="Adams M.D."/>
            <person name="Hunkapiller M.W."/>
            <person name="Myers E.W."/>
            <person name="Venter J.C."/>
        </authorList>
    </citation>
    <scope>NUCLEOTIDE SEQUENCE [LARGE SCALE GENOMIC DNA]</scope>
</reference>
<reference key="8">
    <citation type="journal article" date="2004" name="Genome Res.">
        <title>The status, quality, and expansion of the NIH full-length cDNA project: the Mammalian Gene Collection (MGC).</title>
        <authorList>
            <consortium name="The MGC Project Team"/>
        </authorList>
    </citation>
    <scope>NUCLEOTIDE SEQUENCE [LARGE SCALE MRNA] (ISOFORM 1)</scope>
    <source>
        <tissue>Brain</tissue>
        <tissue>Ovary</tissue>
    </source>
</reference>
<reference key="9">
    <citation type="journal article" date="1994" name="EMBO J.">
        <title>Differential tyrosine phosphorylation of the IFNAR chain of the type I interferon receptor and of an associated surface protein in response to IFN-alpha and IFN-beta.</title>
        <authorList>
            <person name="Abramovich C."/>
            <person name="Shulman L.M."/>
            <person name="Ratovitski E."/>
            <person name="Harroch S."/>
            <person name="Tovey M."/>
            <person name="Eid P."/>
            <person name="Revel M."/>
        </authorList>
    </citation>
    <scope>FUNCTION</scope>
</reference>
<reference key="10">
    <citation type="journal article" date="1994" name="FEBS Lett.">
        <title>Identification of mRNAs encoding two different soluble forms of the human interferon alpha-receptor.</title>
        <authorList>
            <person name="Abramovich C."/>
            <person name="Ratovitski E."/>
            <person name="Lundgren E."/>
            <person name="Revel M."/>
        </authorList>
    </citation>
    <scope>NUCLEOTIDE SEQUENCE [MRNA] OF 398-514 (ISOFORM 3)</scope>
    <scope>NUCLEOTIDE SEQUENCE [MRNA] OF 419-557 (ISOFORM 2)</scope>
    <scope>TISSUE SPECIFICITY</scope>
    <scope>ALTERNATIVE SPLICING</scope>
    <source>
        <tissue>Myeloma</tissue>
    </source>
</reference>
<reference key="11">
    <citation type="journal article" date="1994" name="Mol. Cell. Biol.">
        <title>Direct binding to and tyrosine phosphorylation of the alpha subunit of the type I interferon receptor by p135tyk2 tyrosine kinase.</title>
        <authorList>
            <person name="Colamonici O."/>
            <person name="Yan H."/>
            <person name="Domanski P."/>
            <person name="Handa R."/>
            <person name="Smalley D."/>
            <person name="Mullersman J."/>
            <person name="Witte M."/>
            <person name="Krishnan K."/>
            <person name="Krolewski J."/>
        </authorList>
    </citation>
    <scope>PHOSPHORYLATION AT TYR-466 AND TYR-481 BY TYK2</scope>
    <scope>INTERACTION WITH TYK2</scope>
    <scope>FUNCTION</scope>
</reference>
<reference key="12">
    <citation type="journal article" date="1995" name="J. Biol. Chem.">
        <title>Cloning and expression of a long form of the beta subunit of the interferon alpha beta receptor that is required for signaling.</title>
        <authorList>
            <person name="Domanski P."/>
            <person name="Witte M."/>
            <person name="Kellum M."/>
            <person name="Rubinstein M."/>
            <person name="Hackett R."/>
            <person name="Pitha P."/>
            <person name="Colamonici O.R."/>
        </authorList>
    </citation>
    <scope>FUNCTION</scope>
    <scope>INTERACTION WITH IFNAR2</scope>
    <scope>SUBCELLULAR LOCATION</scope>
</reference>
<reference key="13">
    <citation type="journal article" date="1997" name="Mol. Cell. Biol.">
        <title>Functional subdomains of STAT2 required for preassociation with the alpha interferon receptor and for signaling.</title>
        <authorList>
            <person name="Li X."/>
            <person name="Leung S."/>
            <person name="Kerr I.M."/>
            <person name="Stark G.R."/>
        </authorList>
    </citation>
    <scope>FUNCTION</scope>
    <scope>INTERACTION WITH STAT1 AND STAT2</scope>
</reference>
<reference key="14">
    <citation type="journal article" date="1999" name="Biochem. Biophys. Res. Commun.">
        <title>Formation of a uniquely stable type I interferon receptor complex by interferon beta is dependent upon particular interactions between interferon beta and its receptor and independent of tyrosine phosphorylation.</title>
        <authorList>
            <person name="Russell-Harde D."/>
            <person name="Wagner T.C."/>
            <person name="Perez H.D."/>
            <person name="Croze E."/>
        </authorList>
    </citation>
    <scope>FUNCTION</scope>
    <scope>INTERACTION WITH IFNAR2</scope>
    <scope>PHOSPHORYLATION</scope>
</reference>
<reference key="15">
    <citation type="journal article" date="2003" name="EMBO J.">
        <title>SCF(HOS) ubiquitin ligase mediates the ligand-induced down-regulation of the interferon-alpha receptor.</title>
        <authorList>
            <person name="Kumar K.G."/>
            <person name="Tang W."/>
            <person name="Ravindranath A.K."/>
            <person name="Clark W.A."/>
            <person name="Croze E."/>
            <person name="Fuchs S.Y."/>
        </authorList>
    </citation>
    <scope>FUNCTION</scope>
    <scope>INTERACTION WITH FBXW11</scope>
    <scope>UBIQUITINATION</scope>
    <scope>PHOSPHORYLATION AT SER-535</scope>
    <scope>MUTAGENESIS OF SER-535</scope>
    <scope>SUBCELLULAR LOCATION</scope>
</reference>
<reference key="16">
    <citation type="journal article" date="2004" name="J. Biol. Chem.">
        <title>Phosphorylation and specific ubiquitin acceptor sites are required for ubiquitination and degradation of the IFNAR1 subunit of type I interferon receptor.</title>
        <authorList>
            <person name="Kumar K.G."/>
            <person name="Krolewski J.J."/>
            <person name="Fuchs S.Y."/>
        </authorList>
    </citation>
    <scope>FUNCTION</scope>
    <scope>PHOSPHORYLATION AT SER-535</scope>
    <scope>MUTAGENESIS OF LYS-501; 525-LYS-LYS-526; SER-535 AND SER-539</scope>
    <scope>UBIQUITINATION</scope>
    <scope>INTERACTION WITH FBXW11 AND TYK2</scope>
</reference>
<reference key="17">
    <citation type="journal article" date="2007" name="J. Cell Biol.">
        <title>Site-specific ubiquitination exposes a linear motif to promote interferon-alpha receptor endocytosis.</title>
        <authorList>
            <person name="Kumar K.G."/>
            <person name="Barriere H."/>
            <person name="Carbone C.J."/>
            <person name="Liu J."/>
            <person name="Swaminathan G."/>
            <person name="Xu P."/>
            <person name="Li Y."/>
            <person name="Baker D.P."/>
            <person name="Peng J."/>
            <person name="Lukacs G.L."/>
            <person name="Fuchs S.Y."/>
        </authorList>
    </citation>
    <scope>SUBCELLULAR LOCATION</scope>
    <scope>UBIQUITINATION</scope>
    <scope>PHOSPHORYLATION AT SER-535</scope>
    <scope>INTERACTION WITH FBXW11</scope>
    <scope>MUTAGENESIS OF TYR-466</scope>
</reference>
<reference key="18">
    <citation type="journal article" date="2009" name="Anal. Chem.">
        <title>Lys-N and trypsin cover complementary parts of the phosphoproteome in a refined SCX-based approach.</title>
        <authorList>
            <person name="Gauci S."/>
            <person name="Helbig A.O."/>
            <person name="Slijper M."/>
            <person name="Krijgsveld J."/>
            <person name="Heck A.J."/>
            <person name="Mohammed S."/>
        </authorList>
    </citation>
    <scope>IDENTIFICATION BY MASS SPECTROMETRY [LARGE SCALE ANALYSIS]</scope>
</reference>
<reference key="19">
    <citation type="journal article" date="2009" name="J. Biol. Chem.">
        <title>Palmitoylation of interferon-alpha (IFN-alpha) receptor subunit IFNAR1 is required for the activation of Stat1 and Stat2 by IFN-alpha.</title>
        <authorList>
            <person name="Claudinon J."/>
            <person name="Gonnord P."/>
            <person name="Beslard E."/>
            <person name="Marchetti M."/>
            <person name="Mitchell K."/>
            <person name="Boularan C."/>
            <person name="Johannes L."/>
            <person name="Eid P."/>
            <person name="Lamaze C."/>
        </authorList>
    </citation>
    <scope>FUNCTION</scope>
    <scope>PALMITOYLATION AT CYS-463</scope>
</reference>
<reference key="20">
    <citation type="journal article" date="2009" name="Nat. Biotechnol.">
        <title>Mass-spectrometric identification and relative quantification of N-linked cell surface glycoproteins.</title>
        <authorList>
            <person name="Wollscheid B."/>
            <person name="Bausch-Fluck D."/>
            <person name="Henderson C."/>
            <person name="O'Brien R."/>
            <person name="Bibel M."/>
            <person name="Schiess R."/>
            <person name="Aebersold R."/>
            <person name="Watts J.D."/>
        </authorList>
    </citation>
    <scope>GLYCOSYLATION [LARGE SCALE ANALYSIS] AT ASN-58; ASN-110 AND ASN-313</scope>
    <source>
        <tissue>Leukemic T-cell</tissue>
    </source>
</reference>
<reference key="21">
    <citation type="journal article" date="2009" name="Sci. Signal.">
        <title>Quantitative phosphoproteomic analysis of T cell receptor signaling reveals system-wide modulation of protein-protein interactions.</title>
        <authorList>
            <person name="Mayya V."/>
            <person name="Lundgren D.H."/>
            <person name="Hwang S.-I."/>
            <person name="Rezaul K."/>
            <person name="Wu L."/>
            <person name="Eng J.K."/>
            <person name="Rodionov V."/>
            <person name="Han D.K."/>
        </authorList>
    </citation>
    <scope>PHOSPHORYLATION [LARGE SCALE ANALYSIS] AT SER-495</scope>
    <scope>IDENTIFICATION BY MASS SPECTROMETRY [LARGE SCALE ANALYSIS]</scope>
    <source>
        <tissue>Leukemic T-cell</tissue>
    </source>
</reference>
<reference key="22">
    <citation type="journal article" date="2013" name="Cell Rep.">
        <title>A BRISC-SHMT complex deubiquitinates IFNAR1 and regulates interferon responses.</title>
        <authorList>
            <person name="Zheng H."/>
            <person name="Gupta V."/>
            <person name="Patterson-Fortin J."/>
            <person name="Bhattacharya S."/>
            <person name="Katlinski K."/>
            <person name="Wu J."/>
            <person name="Varghese B."/>
            <person name="Carbone C.J."/>
            <person name="Aressy B."/>
            <person name="Fuchs S.Y."/>
            <person name="Greenberg R.A."/>
        </authorList>
    </citation>
    <scope>FUNCTION</scope>
    <scope>UBIQUITINATION</scope>
    <scope>MUTAGENESIS OF SER-535</scope>
    <scope>PHOSPHORYLATION AT SER-535</scope>
    <scope>INTERACTION WITH SHMT2 AND THE BRISC COMPLEX</scope>
    <scope>IDENTIFICATION BY MASS SPECTROMETRY</scope>
</reference>
<reference key="23">
    <citation type="journal article" date="2013" name="J. Proteome Res.">
        <title>Toward a comprehensive characterization of a human cancer cell phosphoproteome.</title>
        <authorList>
            <person name="Zhou H."/>
            <person name="Di Palma S."/>
            <person name="Preisinger C."/>
            <person name="Peng M."/>
            <person name="Polat A.N."/>
            <person name="Heck A.J."/>
            <person name="Mohammed S."/>
        </authorList>
    </citation>
    <scope>PHOSPHORYLATION [LARGE SCALE ANALYSIS] AT SER-495</scope>
    <scope>IDENTIFICATION BY MASS SPECTROMETRY [LARGE SCALE ANALYSIS]</scope>
    <source>
        <tissue>Cervix carcinoma</tissue>
        <tissue>Erythroleukemia</tissue>
    </source>
</reference>
<reference key="24">
    <citation type="journal article" date="2019" name="J. Exp. Med.">
        <title>Inherited IFNAR1 deficiency in otherwise healthy patients with adverse reaction to measles and yellow fever live vaccines.</title>
        <authorList>
            <person name="Hernandez N."/>
            <person name="Bucciol G."/>
            <person name="Moens L."/>
            <person name="Le Pen J."/>
            <person name="Shahrooei M."/>
            <person name="Goudouris E."/>
            <person name="Shirkani A."/>
            <person name="Changi-Ashtiani M."/>
            <person name="Rokni-Zadeh H."/>
            <person name="Sayar E.H."/>
            <person name="Reisli I."/>
            <person name="Lefevre-Utile A."/>
            <person name="Zijlmans D."/>
            <person name="Jurado A."/>
            <person name="Pholien R."/>
            <person name="Drutman S."/>
            <person name="Belkaya S."/>
            <person name="Cobat A."/>
            <person name="Boudewijns R."/>
            <person name="Jochmans D."/>
            <person name="Neyts J."/>
            <person name="Seeleuthner Y."/>
            <person name="Lorenzo-Diaz L."/>
            <person name="Enemchukwu C."/>
            <person name="Tietjen I."/>
            <person name="Hoffmann H.H."/>
            <person name="Momenilandi M."/>
            <person name="Poeyhoenen L."/>
            <person name="Siqueira M.M."/>
            <person name="de Lima S.M.B."/>
            <person name="de Souza Matos D.C."/>
            <person name="Homma A."/>
            <person name="Maia M.L.S."/>
            <person name="da Costa Barros T.A."/>
            <person name="de Oliveira P.M.N."/>
            <person name="Mesquita E.C."/>
            <person name="Gijsbers R."/>
            <person name="Zhang S.Y."/>
            <person name="Seligman S.J."/>
            <person name="Abel L."/>
            <person name="Hertzog P."/>
            <person name="Marr N."/>
            <person name="Martins R.M."/>
            <person name="Meyts I."/>
            <person name="Zhang Q."/>
            <person name="MacDonald M.R."/>
            <person name="Rice C.M."/>
            <person name="Casanova J.L."/>
            <person name="Jouanguy E."/>
            <person name="Bossuyt X."/>
        </authorList>
    </citation>
    <scope>INVOLVEMENT IN IMD106</scope>
    <scope>VARIANT IMD106 261-TRP--VAL-557 DEL</scope>
    <scope>CHARACTERIZATION OF VARIANT IMD106 261-TRP--VAL-557 DEL</scope>
    <scope>FUNCTION</scope>
</reference>
<reference key="25">
    <citation type="journal article" date="2021" name="Eur. J. Immunol.">
        <title>TRIM10 binds to IFN-alpha/beta receptor 1 to negatively regulate type I IFN signal transduction.</title>
        <authorList>
            <person name="Guo M."/>
            <person name="Cao W."/>
            <person name="Chen S."/>
            <person name="Tian R."/>
            <person name="Wang L."/>
            <person name="Liu Q."/>
            <person name="Zhang L."/>
            <person name="Wang Z."/>
            <person name="Zhao M."/>
            <person name="Lu Q."/>
            <person name="Zhu H."/>
        </authorList>
    </citation>
    <scope>INTERACTION WITH TRIM10</scope>
</reference>
<reference key="26">
    <citation type="journal article" date="2011" name="Cell">
        <title>Structural linkage between ligand discrimination and receptor activation by type I interferons.</title>
        <authorList>
            <person name="Thomas C."/>
            <person name="Moraga I."/>
            <person name="Levin D."/>
            <person name="Krutzik P.O."/>
            <person name="Podoplelova Y."/>
            <person name="Trejo A."/>
            <person name="Lee C."/>
            <person name="Yarden G."/>
            <person name="Vleck S.E."/>
            <person name="Glenn J.S."/>
            <person name="Nolan G.P."/>
            <person name="Piehler J."/>
            <person name="Schreiber G."/>
            <person name="Garcia K.C."/>
        </authorList>
    </citation>
    <scope>X-RAY CRYSTALLOGRAPHY (1.90 ANGSTROMS) OF 30-332 IN COMPLEX WITH IFNAR2; IFNA2 AND IFNW1</scope>
    <scope>FUNCTION</scope>
    <scope>SUBUNIT</scope>
    <scope>DISULFIDE BONDS</scope>
    <scope>GLYCOSYLATION AT ASN-172</scope>
</reference>
<reference key="27">
    <citation type="journal article" date="2014" name="Nat. Struct. Mol. Biol.">
        <title>Structural basis of recognition of interferon-alpha receptor by tyrosine kinase 2.</title>
        <authorList>
            <person name="Wallweber H.J."/>
            <person name="Tam C."/>
            <person name="Franke Y."/>
            <person name="Starovasnik M.A."/>
            <person name="Lupardus P.J."/>
        </authorList>
    </citation>
    <scope>X-RAY CRYSTALLOGRAPHY (1.99 ANGSTROMS) OF 478-507 IN COMPLEX WITH TYK2</scope>
    <scope>INTERACTION WITH TYK2</scope>
    <scope>MUTAGENESIS OF 491-LEU-LEU-492; 496-GLU-GLU-497 AND GLU-500</scope>
</reference>
<reference key="28">
    <citation type="journal article" date="2020" name="Science">
        <title>Inborn errors of type I IFN immunity in patients with life-threatening COVID-19.</title>
        <authorList>
            <consortium name="COVID-STORM Clinicians"/>
            <consortium name="COVID Clinicians"/>
            <consortium name="Imagine COVID Group"/>
            <consortium name="French COVID Cohort Study Group"/>
            <consortium name="CoV-Contact Cohort"/>
            <consortium name="Amsterdam UMC Covid-19 Biobank"/>
            <consortium name="COVID Human Genetic Effort"/>
            <consortium name="NIAID-USUHS/TAGC COVID Immunity Group"/>
            <person name="Zhang Q."/>
            <person name="Bastard P."/>
            <person name="Liu Z."/>
            <person name="Le Pen J."/>
            <person name="Moncada-Velez M."/>
            <person name="Chen J."/>
            <person name="Ogishi M."/>
            <person name="Sabli I.K.D."/>
            <person name="Hodeib S."/>
            <person name="Korol C."/>
            <person name="Rosain J."/>
            <person name="Bilguvar K."/>
            <person name="Ye J."/>
            <person name="Bolze A."/>
            <person name="Bigio B."/>
            <person name="Yang R."/>
            <person name="Arias A.A."/>
            <person name="Zhou Q."/>
            <person name="Zhang Y."/>
            <person name="Onodi F."/>
            <person name="Korniotis S."/>
            <person name="Karpf L."/>
            <person name="Philippot Q."/>
            <person name="Chbihi M."/>
            <person name="Bonnet-Madin L."/>
            <person name="Dorgham K."/>
            <person name="Smith N."/>
            <person name="Schneider W.M."/>
            <person name="Razooky B.S."/>
            <person name="Hoffmann H.H."/>
            <person name="Michailidis E."/>
            <person name="Moens L."/>
            <person name="Han J.E."/>
            <person name="Lorenzo L."/>
            <person name="Bizien L."/>
            <person name="Meade P."/>
            <person name="Neehus A.L."/>
            <person name="Ugurbil A.C."/>
            <person name="Corneau A."/>
            <person name="Kerner G."/>
            <person name="Zhang P."/>
            <person name="Rapaport F."/>
            <person name="Seeleuthner Y."/>
            <person name="Manry J."/>
            <person name="Masson C."/>
            <person name="Schmitt Y."/>
            <person name="Schlueter A."/>
            <person name="Le Voyer T."/>
            <person name="Khan T."/>
            <person name="Li J."/>
            <person name="Fellay J."/>
            <person name="Roussel L."/>
            <person name="Shahrooei M."/>
            <person name="Alosaimi M.F."/>
            <person name="Mansouri D."/>
            <person name="Al-Saud H."/>
            <person name="Al-Mulla F."/>
            <person name="Almourfi F."/>
            <person name="Al-Muhsen S.Z."/>
            <person name="Alsohime F."/>
            <person name="Al Turki S."/>
            <person name="Hasanato R."/>
            <person name="van de Beek D."/>
            <person name="Biondi A."/>
            <person name="Bettini L.R."/>
            <person name="D'Angio' M."/>
            <person name="Bonfanti P."/>
            <person name="Imberti L."/>
            <person name="Sottini A."/>
            <person name="Paghera S."/>
            <person name="Quiros-Roldan E."/>
            <person name="Rossi C."/>
            <person name="Oler A.J."/>
            <person name="Tompkins M.F."/>
            <person name="Alba C."/>
            <person name="Vandernoot I."/>
            <person name="Goffard J.C."/>
            <person name="Smits G."/>
            <person name="Migeotte I."/>
            <person name="Haerynck F."/>
            <person name="Soler-Palacin P."/>
            <person name="Martin-Nalda A."/>
            <person name="Colobran R."/>
            <person name="Morange P.E."/>
            <person name="Keles S."/>
            <person name="Coelkesen F."/>
            <person name="Ozcelik T."/>
            <person name="Yasar K.K."/>
            <person name="Senoglu S."/>
            <person name="Karabela S.N."/>
            <person name="Rodriguez-Gallego C."/>
            <person name="Novelli G."/>
            <person name="Hraiech S."/>
            <person name="Tandjaoui-Lambiotte Y."/>
            <person name="Duval X."/>
            <person name="Laouenan C."/>
            <person name="Snow A.L."/>
            <person name="Dalgard C.L."/>
            <person name="Milner J.D."/>
            <person name="Vinh D.C."/>
            <person name="Mogensen T.H."/>
            <person name="Marr N."/>
            <person name="Spaan A.N."/>
            <person name="Boisson B."/>
            <person name="Boisson-Dupuis S."/>
            <person name="Bustamante J."/>
            <person name="Puel A."/>
            <person name="Ciancanelli M.J."/>
            <person name="Meyts I."/>
            <person name="Maniatis T."/>
            <person name="Soumelis V."/>
            <person name="Amara A."/>
            <person name="Nussenzweig M."/>
            <person name="Garcia-Sastre A."/>
            <person name="Krammer F."/>
            <person name="Pujol A."/>
            <person name="Duffy D."/>
            <person name="Lifton R.P."/>
            <person name="Zhang S.Y."/>
            <person name="Gorochov G."/>
            <person name="Beziat V."/>
            <person name="Jouanguy E."/>
            <person name="Sancho-Shimizu V."/>
            <person name="Rice C.M."/>
            <person name="Abel L."/>
            <person name="Notarangelo L.D."/>
            <person name="Cobat A."/>
            <person name="Su H.C."/>
            <person name="Casanova J.L."/>
        </authorList>
    </citation>
    <scope>VARIANTS VAL-24; ARG-57; CYS-73; HIS-80; ALA-83; SER-88; MET-169; VAL-183; CYS-306; ILE-307; PRO-335 DEL; LEU-386; ARG-422; THR-424 AND LYS-515</scope>
    <scope>CHARACTERIZATION OF VARIANTS VAL-24; ARG-57; CYS-73; HIS-80; ALA-83; SER-88; MET-169; VAL-183; CYS-306; ILE-307; PRO-335 DEL; LEU-386; ARG-422; THR-424 AND LYS-515</scope>
    <scope>FUNCTION</scope>
</reference>
<reference key="29">
    <citation type="journal article" date="2022" name="Clin. Infect. Dis.">
        <title>A Novel Case of Homozygous Interferon Alpha/Beta Receptor Alpha Chain (IFNAR1) Deficiency With Hemophagocytic Lymphohistiocytosis.</title>
        <authorList>
            <person name="Gothe F."/>
            <person name="Hatton C.F."/>
            <person name="Truong L."/>
            <person name="Klimova Z."/>
            <person name="Kanderova V."/>
            <person name="Fejtkova M."/>
            <person name="Grainger A."/>
            <person name="Bigley V."/>
            <person name="Perthen J."/>
            <person name="Mitra D."/>
            <person name="Janda A."/>
            <person name="Fronkova E."/>
            <person name="Moravcikova D."/>
            <person name="Hambleton S."/>
            <person name="Duncan C.J.A."/>
        </authorList>
    </citation>
    <scope>VARIANT IMD106 308-GLN--VAL-557 DEL</scope>
    <scope>CHARACTERIZATION OF VARIANT IMD106 308-GLN--VAL-557 DEL</scope>
    <scope>FUNCTION</scope>
</reference>
<reference key="30">
    <citation type="journal article" date="2022" name="J. Exp. Med.">
        <title>A loss-of-function IFNAR1 allele in Polynesia underlies severe viral diseases in homozygotes.</title>
        <authorList>
            <person name="Bastard P."/>
            <person name="Hsiao K.C."/>
            <person name="Zhang Q."/>
            <person name="Choin J."/>
            <person name="Best E."/>
            <person name="Chen J."/>
            <person name="Gervais A."/>
            <person name="Bizien L."/>
            <person name="Materna M."/>
            <person name="Harmant C."/>
            <person name="Roux M."/>
            <person name="Hawley N.L."/>
            <person name="Weeks D.E."/>
            <person name="McGarvey S.T."/>
            <person name="Sandoval K."/>
            <person name="Barberena-Jonas C."/>
            <person name="Quinto-Cortes C.D."/>
            <person name="Hagelberg E."/>
            <person name="Mentzer A.J."/>
            <person name="Robson K."/>
            <person name="Coulibaly B."/>
            <person name="Seeleuthner Y."/>
            <person name="Bigio B."/>
            <person name="Li Z."/>
            <person name="Uze G."/>
            <person name="Pellegrini S."/>
            <person name="Lorenzo L."/>
            <person name="Sbihi Z."/>
            <person name="Latour S."/>
            <person name="Besnard M."/>
            <person name="Adam de Beaumais T."/>
            <person name="Jacqz Aigrain E."/>
            <person name="Beziat V."/>
            <person name="Deka R."/>
            <person name="Esera Tulifau L."/>
            <person name="Viali S."/>
            <person name="Reupena M.S."/>
            <person name="Naseri T."/>
            <person name="McNaughton P."/>
            <person name="Sarkozy V."/>
            <person name="Peake J."/>
            <person name="Blincoe A."/>
            <person name="Primhak S."/>
            <person name="Stables S."/>
            <person name="Gibson K."/>
            <person name="Woon S.T."/>
            <person name="Drake K.M."/>
            <person name="Hill A.V.S."/>
            <person name="Chan C.Y."/>
            <person name="King R."/>
            <person name="Ameratunga R."/>
            <person name="Teiti I."/>
            <person name="Aubry M."/>
            <person name="Cao-Lormeau V.M."/>
            <person name="Tangye S.G."/>
            <person name="Zhang S.Y."/>
            <person name="Jouanguy E."/>
            <person name="Gray P."/>
            <person name="Abel L."/>
            <person name="Moreno-Estrada A."/>
            <person name="Minster R.L."/>
            <person name="Quintana-Murci L."/>
            <person name="Wood A.C."/>
            <person name="Casanova J.L."/>
        </authorList>
    </citation>
    <scope>VARIANT IMD106 386-GLU--VAL-557 DEL</scope>
    <scope>CHARACTERIZATION OF VARIANT IMD106 386-GLU--VAL-557 DEL</scope>
    <scope>FUNCTION</scope>
    <scope>SUBCELLULAR LOCATION</scope>
</reference>
<protein>
    <recommendedName>
        <fullName>Interferon alpha/beta receptor 1</fullName>
        <shortName>IFN-R-1</shortName>
        <shortName>IFN-alpha/beta receptor 1</shortName>
    </recommendedName>
    <alternativeName>
        <fullName>Cytokine receptor class-II member 1</fullName>
    </alternativeName>
    <alternativeName>
        <fullName>Cytokine receptor family 2 member 1</fullName>
        <shortName>CRF2-1</shortName>
    </alternativeName>
    <alternativeName>
        <fullName>Type I interferon receptor 1</fullName>
    </alternativeName>
</protein>